<accession>Q9ZLE4</accession>
<comment type="catalytic activity">
    <reaction evidence="1">
        <text>a 3-oxo acid + succinyl-CoA = a 3-oxoacyl-CoA + succinate</text>
        <dbReference type="Rhea" id="RHEA:24564"/>
        <dbReference type="ChEBI" id="CHEBI:30031"/>
        <dbReference type="ChEBI" id="CHEBI:35973"/>
        <dbReference type="ChEBI" id="CHEBI:57292"/>
        <dbReference type="ChEBI" id="CHEBI:90726"/>
        <dbReference type="EC" id="2.8.3.5"/>
    </reaction>
</comment>
<comment type="subunit">
    <text>Heterodimer of a subunit A and a subunit B.</text>
</comment>
<comment type="similarity">
    <text evidence="2">Belongs to the 3-oxoacid CoA-transferase subunit B family.</text>
</comment>
<organism>
    <name type="scientific">Helicobacter pylori (strain J99 / ATCC 700824)</name>
    <name type="common">Campylobacter pylori J99</name>
    <dbReference type="NCBI Taxonomy" id="85963"/>
    <lineage>
        <taxon>Bacteria</taxon>
        <taxon>Pseudomonadati</taxon>
        <taxon>Campylobacterota</taxon>
        <taxon>Epsilonproteobacteria</taxon>
        <taxon>Campylobacterales</taxon>
        <taxon>Helicobacteraceae</taxon>
        <taxon>Helicobacter</taxon>
    </lineage>
</organism>
<feature type="chain" id="PRO_0000157922" description="Succinyl-CoA:3-ketoacid coenzyme A transferase subunit B">
    <location>
        <begin position="1"/>
        <end position="207"/>
    </location>
</feature>
<feature type="active site" evidence="1">
    <location>
        <position position="43"/>
    </location>
</feature>
<sequence>MREAIIKRAAKELKEGMYVNLGIGLPTLVANEVSGMNIVFQSENGLLGIGAYPLEGGVDADLINAGKETITVVPGASFFNSADSFAMIRGGHIDLAILGGMEVSQNGDLANWMIPKKLIKGMGGAMDLVHGAKKVIVIMEHCNKYGESKVKKECSLPLTGKGVVHQLITDLAVFEFSNNAMELVELQEGVSLDQVKEKTEAEFEVHL</sequence>
<protein>
    <recommendedName>
        <fullName>Succinyl-CoA:3-ketoacid coenzyme A transferase subunit B</fullName>
        <ecNumber>2.8.3.5</ecNumber>
    </recommendedName>
    <alternativeName>
        <fullName>OXCT B</fullName>
    </alternativeName>
    <alternativeName>
        <fullName>Succinyl-CoA:3-oxoacid CoA-transferase</fullName>
    </alternativeName>
</protein>
<name>SCOB_HELPJ</name>
<keyword id="KW-0808">Transferase</keyword>
<reference key="1">
    <citation type="journal article" date="1999" name="Nature">
        <title>Genomic sequence comparison of two unrelated isolates of the human gastric pathogen Helicobacter pylori.</title>
        <authorList>
            <person name="Alm R.A."/>
            <person name="Ling L.-S.L."/>
            <person name="Moir D.T."/>
            <person name="King B.L."/>
            <person name="Brown E.D."/>
            <person name="Doig P.C."/>
            <person name="Smith D.R."/>
            <person name="Noonan B."/>
            <person name="Guild B.C."/>
            <person name="deJonge B.L."/>
            <person name="Carmel G."/>
            <person name="Tummino P.J."/>
            <person name="Caruso A."/>
            <person name="Uria-Nickelsen M."/>
            <person name="Mills D.M."/>
            <person name="Ives C."/>
            <person name="Gibson R."/>
            <person name="Merberg D."/>
            <person name="Mills S.D."/>
            <person name="Jiang Q."/>
            <person name="Taylor D.E."/>
            <person name="Vovis G.F."/>
            <person name="Trust T.J."/>
        </authorList>
    </citation>
    <scope>NUCLEOTIDE SEQUENCE [LARGE SCALE GENOMIC DNA]</scope>
    <source>
        <strain>J99 / ATCC 700824</strain>
    </source>
</reference>
<evidence type="ECO:0000255" key="1">
    <source>
        <dbReference type="PROSITE-ProRule" id="PRU10034"/>
    </source>
</evidence>
<evidence type="ECO:0000305" key="2"/>
<proteinExistence type="inferred from homology"/>
<dbReference type="EC" id="2.8.3.5"/>
<dbReference type="EMBL" id="AE001439">
    <property type="protein sequence ID" value="AAD06213.1"/>
    <property type="molecule type" value="Genomic_DNA"/>
</dbReference>
<dbReference type="PIR" id="B71908">
    <property type="entry name" value="B71908"/>
</dbReference>
<dbReference type="RefSeq" id="WP_001206229.1">
    <property type="nucleotide sequence ID" value="NC_000921.1"/>
</dbReference>
<dbReference type="SMR" id="Q9ZLE4"/>
<dbReference type="IntAct" id="Q9ZLE4">
    <property type="interactions" value="1"/>
</dbReference>
<dbReference type="KEGG" id="hpj:jhp_0636"/>
<dbReference type="PATRIC" id="fig|85963.30.peg.348"/>
<dbReference type="eggNOG" id="COG2057">
    <property type="taxonomic scope" value="Bacteria"/>
</dbReference>
<dbReference type="Proteomes" id="UP000000804">
    <property type="component" value="Chromosome"/>
</dbReference>
<dbReference type="GO" id="GO:0008260">
    <property type="term" value="F:succinyl-CoA:3-oxo-acid CoA-transferase activity"/>
    <property type="evidence" value="ECO:0007669"/>
    <property type="project" value="UniProtKB-EC"/>
</dbReference>
<dbReference type="FunFam" id="3.40.1080.10:FF:000001">
    <property type="entry name" value="Succinyl-coa:3-ketoacid-coenzyme a transferase subunit b"/>
    <property type="match status" value="1"/>
</dbReference>
<dbReference type="Gene3D" id="3.40.1080.10">
    <property type="entry name" value="Glutaconate Coenzyme A-transferase"/>
    <property type="match status" value="1"/>
</dbReference>
<dbReference type="InterPro" id="IPR012791">
    <property type="entry name" value="3-oxoacid_CoA-transf_B"/>
</dbReference>
<dbReference type="InterPro" id="IPR004165">
    <property type="entry name" value="CoA_trans_fam_I"/>
</dbReference>
<dbReference type="InterPro" id="IPR004164">
    <property type="entry name" value="CoA_transf_AS"/>
</dbReference>
<dbReference type="InterPro" id="IPR037171">
    <property type="entry name" value="NagB/RpiA_transferase-like"/>
</dbReference>
<dbReference type="NCBIfam" id="TIGR02428">
    <property type="entry name" value="pcaJ_scoB_fam"/>
    <property type="match status" value="1"/>
</dbReference>
<dbReference type="PANTHER" id="PTHR13707">
    <property type="entry name" value="KETOACID-COENZYME A TRANSFERASE"/>
    <property type="match status" value="1"/>
</dbReference>
<dbReference type="PANTHER" id="PTHR13707:SF57">
    <property type="entry name" value="SUCCINYL-COA:3-KETOACID COENZYME A TRANSFERASE SUBUNIT B-RELATED"/>
    <property type="match status" value="1"/>
</dbReference>
<dbReference type="Pfam" id="PF01144">
    <property type="entry name" value="CoA_trans"/>
    <property type="match status" value="1"/>
</dbReference>
<dbReference type="SMART" id="SM00882">
    <property type="entry name" value="CoA_trans"/>
    <property type="match status" value="1"/>
</dbReference>
<dbReference type="SUPFAM" id="SSF100950">
    <property type="entry name" value="NagB/RpiA/CoA transferase-like"/>
    <property type="match status" value="1"/>
</dbReference>
<dbReference type="PROSITE" id="PS01274">
    <property type="entry name" value="COA_TRANSF_2"/>
    <property type="match status" value="1"/>
</dbReference>
<gene>
    <name type="primary">scoB</name>
    <name type="ordered locus">jhp_0636</name>
</gene>